<keyword id="KW-0320">Glycogen biosynthesis</keyword>
<keyword id="KW-0328">Glycosyltransferase</keyword>
<keyword id="KW-1185">Reference proteome</keyword>
<keyword id="KW-0808">Transferase</keyword>
<evidence type="ECO:0000255" key="1">
    <source>
        <dbReference type="HAMAP-Rule" id="MF_00484"/>
    </source>
</evidence>
<proteinExistence type="inferred from homology"/>
<name>GLGA_FINM2</name>
<reference key="1">
    <citation type="journal article" date="2008" name="DNA Res.">
        <title>Complete genome sequence of Finegoldia magna, an anaerobic opportunistic pathogen.</title>
        <authorList>
            <person name="Goto T."/>
            <person name="Yamashita A."/>
            <person name="Hirakawa H."/>
            <person name="Matsutani M."/>
            <person name="Todo K."/>
            <person name="Ohshima K."/>
            <person name="Toh H."/>
            <person name="Miyamoto K."/>
            <person name="Kuhara S."/>
            <person name="Hattori M."/>
            <person name="Shimizu T."/>
            <person name="Akimoto S."/>
        </authorList>
    </citation>
    <scope>NUCLEOTIDE SEQUENCE [LARGE SCALE GENOMIC DNA]</scope>
    <source>
        <strain>ATCC 29328 / DSM 20472 / WAL 2508</strain>
    </source>
</reference>
<organism>
    <name type="scientific">Finegoldia magna (strain ATCC 29328 / DSM 20472 / WAL 2508)</name>
    <name type="common">Peptostreptococcus magnus</name>
    <dbReference type="NCBI Taxonomy" id="334413"/>
    <lineage>
        <taxon>Bacteria</taxon>
        <taxon>Bacillati</taxon>
        <taxon>Bacillota</taxon>
        <taxon>Tissierellia</taxon>
        <taxon>Tissierellales</taxon>
        <taxon>Peptoniphilaceae</taxon>
        <taxon>Finegoldia</taxon>
    </lineage>
</organism>
<sequence length="474" mass="55635">MKILYCAAEADPFIKTGGLADVAGTLPLEMKKQGHDVKVVIPLYKLIDEEYKKKFEFEGSFYVDLDFKHHYVGVFKYIHRGVEFYFLDNEDYFNRDNVYGEYDDCERFVFFSKACVQLLRYIDFDCDIIHSNDWHTAMVNVYARDFAKGDPFYESIKTVFTIHNLKYQGVFSSNSLRQTDLSPMYFTEDALKFYDAINFMKGAIVFSDRVTTVSKTYADEIKYSFFGEGLDGVIRQYHYKISGITNGIDTTIWNPETDKYLFKNYSLKNIKDKDENKKALQRMYGLEEKNVPVFAMVTRLVENKGLELVRYIMDEFLTTEDVQVVILGTGDYSYEEMFKYYEWKFPDKLKANIYYNNEESHKIYAGADFLMMPSIFEPCGISQLIAMRYGTIPVVRETGGLRDTVQSFNEFSKEGNGFSFTNINAHDFLYTLRRAISFYYNDDFNIIKENAMNSKNDWEKSAKEYIELYEEIIK</sequence>
<comment type="function">
    <text evidence="1">Synthesizes alpha-1,4-glucan chains using ADP-glucose.</text>
</comment>
<comment type="catalytic activity">
    <reaction evidence="1">
        <text>[(1-&gt;4)-alpha-D-glucosyl](n) + ADP-alpha-D-glucose = [(1-&gt;4)-alpha-D-glucosyl](n+1) + ADP + H(+)</text>
        <dbReference type="Rhea" id="RHEA:18189"/>
        <dbReference type="Rhea" id="RHEA-COMP:9584"/>
        <dbReference type="Rhea" id="RHEA-COMP:9587"/>
        <dbReference type="ChEBI" id="CHEBI:15378"/>
        <dbReference type="ChEBI" id="CHEBI:15444"/>
        <dbReference type="ChEBI" id="CHEBI:57498"/>
        <dbReference type="ChEBI" id="CHEBI:456216"/>
        <dbReference type="EC" id="2.4.1.21"/>
    </reaction>
</comment>
<comment type="pathway">
    <text evidence="1">Glycan biosynthesis; glycogen biosynthesis.</text>
</comment>
<comment type="similarity">
    <text evidence="1">Belongs to the glycosyltransferase 1 family. Bacterial/plant glycogen synthase subfamily.</text>
</comment>
<feature type="chain" id="PRO_1000126077" description="Glycogen synthase">
    <location>
        <begin position="1"/>
        <end position="474"/>
    </location>
</feature>
<feature type="binding site" evidence="1">
    <location>
        <position position="15"/>
    </location>
    <ligand>
        <name>ADP-alpha-D-glucose</name>
        <dbReference type="ChEBI" id="CHEBI:57498"/>
    </ligand>
</feature>
<dbReference type="EC" id="2.4.1.21" evidence="1"/>
<dbReference type="EMBL" id="AP008971">
    <property type="protein sequence ID" value="BAG08454.1"/>
    <property type="molecule type" value="Genomic_DNA"/>
</dbReference>
<dbReference type="RefSeq" id="WP_002840260.1">
    <property type="nucleotide sequence ID" value="NC_010376.1"/>
</dbReference>
<dbReference type="SMR" id="B0S264"/>
<dbReference type="STRING" id="334413.FMG_1036"/>
<dbReference type="CAZy" id="GT5">
    <property type="family name" value="Glycosyltransferase Family 5"/>
</dbReference>
<dbReference type="KEGG" id="fma:FMG_1036"/>
<dbReference type="eggNOG" id="COG0297">
    <property type="taxonomic scope" value="Bacteria"/>
</dbReference>
<dbReference type="HOGENOM" id="CLU_009583_18_2_9"/>
<dbReference type="UniPathway" id="UPA00164"/>
<dbReference type="Proteomes" id="UP000001319">
    <property type="component" value="Chromosome"/>
</dbReference>
<dbReference type="GO" id="GO:0009011">
    <property type="term" value="F:alpha-1,4-glucan glucosyltransferase (ADP-glucose donor) activity"/>
    <property type="evidence" value="ECO:0007669"/>
    <property type="project" value="UniProtKB-UniRule"/>
</dbReference>
<dbReference type="GO" id="GO:0004373">
    <property type="term" value="F:alpha-1,4-glucan glucosyltransferase (UDP-glucose donor) activity"/>
    <property type="evidence" value="ECO:0007669"/>
    <property type="project" value="InterPro"/>
</dbReference>
<dbReference type="GO" id="GO:0005978">
    <property type="term" value="P:glycogen biosynthetic process"/>
    <property type="evidence" value="ECO:0007669"/>
    <property type="project" value="UniProtKB-UniRule"/>
</dbReference>
<dbReference type="CDD" id="cd03791">
    <property type="entry name" value="GT5_Glycogen_synthase_DULL1-like"/>
    <property type="match status" value="1"/>
</dbReference>
<dbReference type="Gene3D" id="3.40.50.2000">
    <property type="entry name" value="Glycogen Phosphorylase B"/>
    <property type="match status" value="2"/>
</dbReference>
<dbReference type="HAMAP" id="MF_00484">
    <property type="entry name" value="Glycogen_synth"/>
    <property type="match status" value="1"/>
</dbReference>
<dbReference type="InterPro" id="IPR001296">
    <property type="entry name" value="Glyco_trans_1"/>
</dbReference>
<dbReference type="InterPro" id="IPR011835">
    <property type="entry name" value="GS/SS"/>
</dbReference>
<dbReference type="InterPro" id="IPR013534">
    <property type="entry name" value="Starch_synth_cat_dom"/>
</dbReference>
<dbReference type="NCBIfam" id="TIGR02095">
    <property type="entry name" value="glgA"/>
    <property type="match status" value="1"/>
</dbReference>
<dbReference type="NCBIfam" id="NF001898">
    <property type="entry name" value="PRK00654.1-1"/>
    <property type="match status" value="1"/>
</dbReference>
<dbReference type="PANTHER" id="PTHR45825:SF11">
    <property type="entry name" value="ALPHA AMYLASE DOMAIN-CONTAINING PROTEIN"/>
    <property type="match status" value="1"/>
</dbReference>
<dbReference type="PANTHER" id="PTHR45825">
    <property type="entry name" value="GRANULE-BOUND STARCH SYNTHASE 1, CHLOROPLASTIC/AMYLOPLASTIC"/>
    <property type="match status" value="1"/>
</dbReference>
<dbReference type="Pfam" id="PF08323">
    <property type="entry name" value="Glyco_transf_5"/>
    <property type="match status" value="1"/>
</dbReference>
<dbReference type="Pfam" id="PF00534">
    <property type="entry name" value="Glycos_transf_1"/>
    <property type="match status" value="1"/>
</dbReference>
<dbReference type="SUPFAM" id="SSF53756">
    <property type="entry name" value="UDP-Glycosyltransferase/glycogen phosphorylase"/>
    <property type="match status" value="1"/>
</dbReference>
<gene>
    <name evidence="1" type="primary">glgA</name>
    <name type="ordered locus">FMG_1036</name>
</gene>
<accession>B0S264</accession>
<protein>
    <recommendedName>
        <fullName evidence="1">Glycogen synthase</fullName>
        <ecNumber evidence="1">2.4.1.21</ecNumber>
    </recommendedName>
    <alternativeName>
        <fullName evidence="1">Starch [bacterial glycogen] synthase</fullName>
    </alternativeName>
</protein>